<sequence>MDPFFLNTQHVELLVSGKQSSPQDLLGIVSESLNQDRIVLFRPGAETVFVELRGKIQQAESHHSGIFSLPVMKGISPQDYRVYHQNGLLAHDPYAFPLLWGEIDSFLFHEGTHQRIYERMGAIPCEIDGVPGVRFIVWAPHAQRVSVIGDFNGWHGLVNPLHKVSDQGVWELFVPGLTAGACYKWEMVTESGQVLIKSDPYGKFFGPPPWSVSVVIDDSYEWTDSEWLEERIKKTEGPMNIYEVHVGSWRWQEGQPLNYKELADQLALYCKQMHYTHVELLPVTEHPLNESWGYQTTGYYAPTSRYGSFEDLQYFIDTMHQHGIGVILDWVPGHFPIDSFAMSGFDGTPLYEYTRNPSPLHPHWHTYTFDYAKPEVCNFLLGSVLFWIDKMHVDGIRVDAVSSMLYLDYGRYAGEWVPNRYGGRENLDAIRFLQQFNTVIHEKYPGVLTFAEESTTFPKITVSVEEGGLGFDYKWNMGWMHDTLHYFEKDFPYRPYHQSDLTFPQWYAFSERFLLPFSHDEVVHGKRSLIGKMPGDAWRQFAQLRLLLGYQICQPGKKLLFMGGEFGQGREWSPGRELDWELLDISYHQGVHLCSQELNALYVQSPQLWQADHLPSSFRWVDFSDVRNGVVAYLRFADADAKKALLCVHHFGVGYFPHYLLPILPLESCDLLMNTDDTRFGGSGKGFREPEILTPEIARQEREAAGLIEADDESGPDCWGLDIELPPSATLIFSVTLQ</sequence>
<accession>O84874</accession>
<dbReference type="EC" id="2.4.1.18" evidence="1"/>
<dbReference type="EMBL" id="AE001273">
    <property type="protein sequence ID" value="AAC68464.1"/>
    <property type="molecule type" value="Genomic_DNA"/>
</dbReference>
<dbReference type="PIR" id="A71462">
    <property type="entry name" value="A71462"/>
</dbReference>
<dbReference type="RefSeq" id="NP_220388.1">
    <property type="nucleotide sequence ID" value="NC_000117.1"/>
</dbReference>
<dbReference type="RefSeq" id="WP_009872986.1">
    <property type="nucleotide sequence ID" value="NC_000117.1"/>
</dbReference>
<dbReference type="SMR" id="O84874"/>
<dbReference type="FunCoup" id="O84874">
    <property type="interactions" value="184"/>
</dbReference>
<dbReference type="STRING" id="272561.CT_866"/>
<dbReference type="CAZy" id="CBM48">
    <property type="family name" value="Carbohydrate-Binding Module Family 48"/>
</dbReference>
<dbReference type="CAZy" id="GH13">
    <property type="family name" value="Glycoside Hydrolase Family 13"/>
</dbReference>
<dbReference type="EnsemblBacteria" id="AAC68464">
    <property type="protein sequence ID" value="AAC68464"/>
    <property type="gene ID" value="CT_866"/>
</dbReference>
<dbReference type="GeneID" id="884667"/>
<dbReference type="KEGG" id="ctr:CT_866"/>
<dbReference type="PATRIC" id="fig|272561.5.peg.957"/>
<dbReference type="HOGENOM" id="CLU_004245_3_2_0"/>
<dbReference type="InParanoid" id="O84874"/>
<dbReference type="OrthoDB" id="9800174at2"/>
<dbReference type="UniPathway" id="UPA00164"/>
<dbReference type="Proteomes" id="UP000000431">
    <property type="component" value="Chromosome"/>
</dbReference>
<dbReference type="GO" id="GO:0005737">
    <property type="term" value="C:cytoplasm"/>
    <property type="evidence" value="ECO:0000318"/>
    <property type="project" value="GO_Central"/>
</dbReference>
<dbReference type="GO" id="GO:0005829">
    <property type="term" value="C:cytosol"/>
    <property type="evidence" value="ECO:0000318"/>
    <property type="project" value="GO_Central"/>
</dbReference>
<dbReference type="GO" id="GO:0003844">
    <property type="term" value="F:1,4-alpha-glucan branching enzyme activity"/>
    <property type="evidence" value="ECO:0000318"/>
    <property type="project" value="GO_Central"/>
</dbReference>
<dbReference type="GO" id="GO:0043169">
    <property type="term" value="F:cation binding"/>
    <property type="evidence" value="ECO:0007669"/>
    <property type="project" value="InterPro"/>
</dbReference>
<dbReference type="GO" id="GO:0004553">
    <property type="term" value="F:hydrolase activity, hydrolyzing O-glycosyl compounds"/>
    <property type="evidence" value="ECO:0007669"/>
    <property type="project" value="InterPro"/>
</dbReference>
<dbReference type="GO" id="GO:0005978">
    <property type="term" value="P:glycogen biosynthetic process"/>
    <property type="evidence" value="ECO:0000318"/>
    <property type="project" value="GO_Central"/>
</dbReference>
<dbReference type="CDD" id="cd11322">
    <property type="entry name" value="AmyAc_Glg_BE"/>
    <property type="match status" value="1"/>
</dbReference>
<dbReference type="CDD" id="cd02855">
    <property type="entry name" value="E_set_GBE_prok_N"/>
    <property type="match status" value="1"/>
</dbReference>
<dbReference type="FunFam" id="2.60.40.10:FF:000169">
    <property type="entry name" value="1,4-alpha-glucan branching enzyme GlgB"/>
    <property type="match status" value="1"/>
</dbReference>
<dbReference type="FunFam" id="3.20.20.80:FF:000003">
    <property type="entry name" value="1,4-alpha-glucan branching enzyme GlgB"/>
    <property type="match status" value="1"/>
</dbReference>
<dbReference type="Gene3D" id="3.20.20.80">
    <property type="entry name" value="Glycosidases"/>
    <property type="match status" value="1"/>
</dbReference>
<dbReference type="Gene3D" id="2.60.40.1180">
    <property type="entry name" value="Golgi alpha-mannosidase II"/>
    <property type="match status" value="1"/>
</dbReference>
<dbReference type="Gene3D" id="2.60.40.10">
    <property type="entry name" value="Immunoglobulins"/>
    <property type="match status" value="1"/>
</dbReference>
<dbReference type="HAMAP" id="MF_00685">
    <property type="entry name" value="GlgB"/>
    <property type="match status" value="1"/>
</dbReference>
<dbReference type="InterPro" id="IPR006048">
    <property type="entry name" value="A-amylase/branching_C"/>
</dbReference>
<dbReference type="InterPro" id="IPR037439">
    <property type="entry name" value="Branching_enzy"/>
</dbReference>
<dbReference type="InterPro" id="IPR006407">
    <property type="entry name" value="GlgB"/>
</dbReference>
<dbReference type="InterPro" id="IPR044143">
    <property type="entry name" value="GlgB_N_E_set_prok"/>
</dbReference>
<dbReference type="InterPro" id="IPR006047">
    <property type="entry name" value="Glyco_hydro_13_cat_dom"/>
</dbReference>
<dbReference type="InterPro" id="IPR004193">
    <property type="entry name" value="Glyco_hydro_13_N"/>
</dbReference>
<dbReference type="InterPro" id="IPR013780">
    <property type="entry name" value="Glyco_hydro_b"/>
</dbReference>
<dbReference type="InterPro" id="IPR017853">
    <property type="entry name" value="Glycoside_hydrolase_SF"/>
</dbReference>
<dbReference type="InterPro" id="IPR013783">
    <property type="entry name" value="Ig-like_fold"/>
</dbReference>
<dbReference type="InterPro" id="IPR014756">
    <property type="entry name" value="Ig_E-set"/>
</dbReference>
<dbReference type="NCBIfam" id="TIGR01515">
    <property type="entry name" value="branching_enzym"/>
    <property type="match status" value="1"/>
</dbReference>
<dbReference type="NCBIfam" id="NF003811">
    <property type="entry name" value="PRK05402.1"/>
    <property type="match status" value="1"/>
</dbReference>
<dbReference type="NCBIfam" id="NF008967">
    <property type="entry name" value="PRK12313.1"/>
    <property type="match status" value="1"/>
</dbReference>
<dbReference type="PANTHER" id="PTHR43651">
    <property type="entry name" value="1,4-ALPHA-GLUCAN-BRANCHING ENZYME"/>
    <property type="match status" value="1"/>
</dbReference>
<dbReference type="PANTHER" id="PTHR43651:SF3">
    <property type="entry name" value="1,4-ALPHA-GLUCAN-BRANCHING ENZYME"/>
    <property type="match status" value="1"/>
</dbReference>
<dbReference type="Pfam" id="PF00128">
    <property type="entry name" value="Alpha-amylase"/>
    <property type="match status" value="2"/>
</dbReference>
<dbReference type="Pfam" id="PF02806">
    <property type="entry name" value="Alpha-amylase_C"/>
    <property type="match status" value="1"/>
</dbReference>
<dbReference type="Pfam" id="PF02922">
    <property type="entry name" value="CBM_48"/>
    <property type="match status" value="1"/>
</dbReference>
<dbReference type="PIRSF" id="PIRSF000463">
    <property type="entry name" value="GlgB"/>
    <property type="match status" value="1"/>
</dbReference>
<dbReference type="SMART" id="SM00642">
    <property type="entry name" value="Aamy"/>
    <property type="match status" value="1"/>
</dbReference>
<dbReference type="SUPFAM" id="SSF51445">
    <property type="entry name" value="(Trans)glycosidases"/>
    <property type="match status" value="1"/>
</dbReference>
<dbReference type="SUPFAM" id="SSF81296">
    <property type="entry name" value="E set domains"/>
    <property type="match status" value="2"/>
</dbReference>
<dbReference type="SUPFAM" id="SSF51011">
    <property type="entry name" value="Glycosyl hydrolase domain"/>
    <property type="match status" value="1"/>
</dbReference>
<proteinExistence type="inferred from homology"/>
<protein>
    <recommendedName>
        <fullName evidence="1">1,4-alpha-glucan branching enzyme GlgB</fullName>
        <ecNumber evidence="1">2.4.1.18</ecNumber>
    </recommendedName>
    <alternativeName>
        <fullName evidence="1">1,4-alpha-D-glucan:1,4-alpha-D-glucan 6-glucosyl-transferase</fullName>
    </alternativeName>
    <alternativeName>
        <fullName evidence="1">Alpha-(1-&gt;4)-glucan branching enzyme</fullName>
    </alternativeName>
    <alternativeName>
        <fullName evidence="1">Glycogen branching enzyme</fullName>
        <shortName evidence="1">BE</shortName>
    </alternativeName>
</protein>
<keyword id="KW-0119">Carbohydrate metabolism</keyword>
<keyword id="KW-0320">Glycogen biosynthesis</keyword>
<keyword id="KW-0321">Glycogen metabolism</keyword>
<keyword id="KW-0328">Glycosyltransferase</keyword>
<keyword id="KW-1185">Reference proteome</keyword>
<keyword id="KW-0808">Transferase</keyword>
<name>GLGB_CHLTR</name>
<reference key="1">
    <citation type="journal article" date="1998" name="Science">
        <title>Genome sequence of an obligate intracellular pathogen of humans: Chlamydia trachomatis.</title>
        <authorList>
            <person name="Stephens R.S."/>
            <person name="Kalman S."/>
            <person name="Lammel C.J."/>
            <person name="Fan J."/>
            <person name="Marathe R."/>
            <person name="Aravind L."/>
            <person name="Mitchell W.P."/>
            <person name="Olinger L."/>
            <person name="Tatusov R.L."/>
            <person name="Zhao Q."/>
            <person name="Koonin E.V."/>
            <person name="Davis R.W."/>
        </authorList>
    </citation>
    <scope>NUCLEOTIDE SEQUENCE [LARGE SCALE GENOMIC DNA]</scope>
    <source>
        <strain>ATCC VR-885 / DSM 19411 / UW-3/Cx</strain>
    </source>
</reference>
<organism>
    <name type="scientific">Chlamydia trachomatis serovar D (strain ATCC VR-885 / DSM 19411 / UW-3/Cx)</name>
    <dbReference type="NCBI Taxonomy" id="272561"/>
    <lineage>
        <taxon>Bacteria</taxon>
        <taxon>Pseudomonadati</taxon>
        <taxon>Chlamydiota</taxon>
        <taxon>Chlamydiia</taxon>
        <taxon>Chlamydiales</taxon>
        <taxon>Chlamydiaceae</taxon>
        <taxon>Chlamydia/Chlamydophila group</taxon>
        <taxon>Chlamydia</taxon>
    </lineage>
</organism>
<comment type="function">
    <text evidence="1">Catalyzes the formation of the alpha-1,6-glucosidic linkages in glycogen by scission of a 1,4-alpha-linked oligosaccharide from growing alpha-1,4-glucan chains and the subsequent attachment of the oligosaccharide to the alpha-1,6 position.</text>
</comment>
<comment type="catalytic activity">
    <reaction evidence="1">
        <text>Transfers a segment of a (1-&gt;4)-alpha-D-glucan chain to a primary hydroxy group in a similar glucan chain.</text>
        <dbReference type="EC" id="2.4.1.18"/>
    </reaction>
</comment>
<comment type="pathway">
    <text evidence="1">Glycan biosynthesis; glycogen biosynthesis.</text>
</comment>
<comment type="subunit">
    <text evidence="1">Monomer.</text>
</comment>
<comment type="similarity">
    <text evidence="1">Belongs to the glycosyl hydrolase 13 family. GlgB subfamily.</text>
</comment>
<feature type="chain" id="PRO_0000188694" description="1,4-alpha-glucan branching enzyme GlgB">
    <location>
        <begin position="1"/>
        <end position="738"/>
    </location>
</feature>
<feature type="active site" description="Nucleophile" evidence="1">
    <location>
        <position position="399"/>
    </location>
</feature>
<feature type="active site" description="Proton donor" evidence="1">
    <location>
        <position position="452"/>
    </location>
</feature>
<gene>
    <name evidence="1" type="primary">glgB</name>
    <name type="ordered locus">CT_866</name>
</gene>
<evidence type="ECO:0000255" key="1">
    <source>
        <dbReference type="HAMAP-Rule" id="MF_00685"/>
    </source>
</evidence>